<protein>
    <recommendedName>
        <fullName>Uncharacterized protein YDR514C</fullName>
    </recommendedName>
</protein>
<evidence type="ECO:0000269" key="1">
    <source>
    </source>
</evidence>
<evidence type="ECO:0000269" key="2">
    <source>
    </source>
</evidence>
<name>YD514_YEAST</name>
<feature type="chain" id="PRO_0000253854" description="Uncharacterized protein YDR514C">
    <location>
        <begin position="1"/>
        <end position="483"/>
    </location>
</feature>
<comment type="subcellular location">
    <subcellularLocation>
        <location evidence="1">Nucleus</location>
    </subcellularLocation>
    <subcellularLocation>
        <location evidence="1">Mitochondrion</location>
    </subcellularLocation>
</comment>
<comment type="miscellaneous">
    <text evidence="2">Present with 125 molecules/cell in log phase SD medium.</text>
</comment>
<accession>Q04408</accession>
<accession>D6VTD5</accession>
<proteinExistence type="evidence at protein level"/>
<reference key="1">
    <citation type="journal article" date="1997" name="Nature">
        <title>The nucleotide sequence of Saccharomyces cerevisiae chromosome IV.</title>
        <authorList>
            <person name="Jacq C."/>
            <person name="Alt-Moerbe J."/>
            <person name="Andre B."/>
            <person name="Arnold W."/>
            <person name="Bahr A."/>
            <person name="Ballesta J.P.G."/>
            <person name="Bargues M."/>
            <person name="Baron L."/>
            <person name="Becker A."/>
            <person name="Biteau N."/>
            <person name="Bloecker H."/>
            <person name="Blugeon C."/>
            <person name="Boskovic J."/>
            <person name="Brandt P."/>
            <person name="Brueckner M."/>
            <person name="Buitrago M.J."/>
            <person name="Coster F."/>
            <person name="Delaveau T."/>
            <person name="del Rey F."/>
            <person name="Dujon B."/>
            <person name="Eide L.G."/>
            <person name="Garcia-Cantalejo J.M."/>
            <person name="Goffeau A."/>
            <person name="Gomez-Peris A."/>
            <person name="Granotier C."/>
            <person name="Hanemann V."/>
            <person name="Hankeln T."/>
            <person name="Hoheisel J.D."/>
            <person name="Jaeger W."/>
            <person name="Jimenez A."/>
            <person name="Jonniaux J.-L."/>
            <person name="Kraemer C."/>
            <person name="Kuester H."/>
            <person name="Laamanen P."/>
            <person name="Legros Y."/>
            <person name="Louis E.J."/>
            <person name="Moeller-Rieker S."/>
            <person name="Monnet A."/>
            <person name="Moro M."/>
            <person name="Mueller-Auer S."/>
            <person name="Nussbaumer B."/>
            <person name="Paricio N."/>
            <person name="Paulin L."/>
            <person name="Perea J."/>
            <person name="Perez-Alonso M."/>
            <person name="Perez-Ortin J.E."/>
            <person name="Pohl T.M."/>
            <person name="Prydz H."/>
            <person name="Purnelle B."/>
            <person name="Rasmussen S.W."/>
            <person name="Remacha M.A."/>
            <person name="Revuelta J.L."/>
            <person name="Rieger M."/>
            <person name="Salom D."/>
            <person name="Saluz H.P."/>
            <person name="Saiz J.E."/>
            <person name="Saren A.-M."/>
            <person name="Schaefer M."/>
            <person name="Scharfe M."/>
            <person name="Schmidt E.R."/>
            <person name="Schneider C."/>
            <person name="Scholler P."/>
            <person name="Schwarz S."/>
            <person name="Soler-Mira A."/>
            <person name="Urrestarazu L.A."/>
            <person name="Verhasselt P."/>
            <person name="Vissers S."/>
            <person name="Voet M."/>
            <person name="Volckaert G."/>
            <person name="Wagner G."/>
            <person name="Wambutt R."/>
            <person name="Wedler E."/>
            <person name="Wedler H."/>
            <person name="Woelfl S."/>
            <person name="Harris D.E."/>
            <person name="Bowman S."/>
            <person name="Brown D."/>
            <person name="Churcher C.M."/>
            <person name="Connor R."/>
            <person name="Dedman K."/>
            <person name="Gentles S."/>
            <person name="Hamlin N."/>
            <person name="Hunt S."/>
            <person name="Jones L."/>
            <person name="McDonald S."/>
            <person name="Murphy L.D."/>
            <person name="Niblett D."/>
            <person name="Odell C."/>
            <person name="Oliver K."/>
            <person name="Rajandream M.A."/>
            <person name="Richards C."/>
            <person name="Shore L."/>
            <person name="Walsh S.V."/>
            <person name="Barrell B.G."/>
            <person name="Dietrich F.S."/>
            <person name="Mulligan J.T."/>
            <person name="Allen E."/>
            <person name="Araujo R."/>
            <person name="Aviles E."/>
            <person name="Berno A."/>
            <person name="Carpenter J."/>
            <person name="Chen E."/>
            <person name="Cherry J.M."/>
            <person name="Chung E."/>
            <person name="Duncan M."/>
            <person name="Hunicke-Smith S."/>
            <person name="Hyman R.W."/>
            <person name="Komp C."/>
            <person name="Lashkari D."/>
            <person name="Lew H."/>
            <person name="Lin D."/>
            <person name="Mosedale D."/>
            <person name="Nakahara K."/>
            <person name="Namath A."/>
            <person name="Oefner P."/>
            <person name="Oh C."/>
            <person name="Petel F.X."/>
            <person name="Roberts D."/>
            <person name="Schramm S."/>
            <person name="Schroeder M."/>
            <person name="Shogren T."/>
            <person name="Shroff N."/>
            <person name="Winant A."/>
            <person name="Yelton M.A."/>
            <person name="Botstein D."/>
            <person name="Davis R.W."/>
            <person name="Johnston M."/>
            <person name="Andrews S."/>
            <person name="Brinkman R."/>
            <person name="Cooper J."/>
            <person name="Ding H."/>
            <person name="Du Z."/>
            <person name="Favello A."/>
            <person name="Fulton L."/>
            <person name="Gattung S."/>
            <person name="Greco T."/>
            <person name="Hallsworth K."/>
            <person name="Hawkins J."/>
            <person name="Hillier L.W."/>
            <person name="Jier M."/>
            <person name="Johnson D."/>
            <person name="Johnston L."/>
            <person name="Kirsten J."/>
            <person name="Kucaba T."/>
            <person name="Langston Y."/>
            <person name="Latreille P."/>
            <person name="Le T."/>
            <person name="Mardis E."/>
            <person name="Menezes S."/>
            <person name="Miller N."/>
            <person name="Nhan M."/>
            <person name="Pauley A."/>
            <person name="Peluso D."/>
            <person name="Rifkin L."/>
            <person name="Riles L."/>
            <person name="Taich A."/>
            <person name="Trevaskis E."/>
            <person name="Vignati D."/>
            <person name="Wilcox L."/>
            <person name="Wohldman P."/>
            <person name="Vaudin M."/>
            <person name="Wilson R."/>
            <person name="Waterston R."/>
            <person name="Albermann K."/>
            <person name="Hani J."/>
            <person name="Heumann K."/>
            <person name="Kleine K."/>
            <person name="Mewes H.-W."/>
            <person name="Zollner A."/>
            <person name="Zaccaria P."/>
        </authorList>
    </citation>
    <scope>NUCLEOTIDE SEQUENCE [LARGE SCALE GENOMIC DNA]</scope>
    <source>
        <strain>ATCC 204508 / S288c</strain>
    </source>
</reference>
<reference key="2">
    <citation type="journal article" date="2014" name="G3 (Bethesda)">
        <title>The reference genome sequence of Saccharomyces cerevisiae: Then and now.</title>
        <authorList>
            <person name="Engel S.R."/>
            <person name="Dietrich F.S."/>
            <person name="Fisk D.G."/>
            <person name="Binkley G."/>
            <person name="Balakrishnan R."/>
            <person name="Costanzo M.C."/>
            <person name="Dwight S.S."/>
            <person name="Hitz B.C."/>
            <person name="Karra K."/>
            <person name="Nash R.S."/>
            <person name="Weng S."/>
            <person name="Wong E.D."/>
            <person name="Lloyd P."/>
            <person name="Skrzypek M.S."/>
            <person name="Miyasato S.R."/>
            <person name="Simison M."/>
            <person name="Cherry J.M."/>
        </authorList>
    </citation>
    <scope>GENOME REANNOTATION</scope>
    <source>
        <strain>ATCC 204508 / S288c</strain>
    </source>
</reference>
<reference key="3">
    <citation type="journal article" date="2007" name="Genome Res.">
        <title>Approaching a complete repository of sequence-verified protein-encoding clones for Saccharomyces cerevisiae.</title>
        <authorList>
            <person name="Hu Y."/>
            <person name="Rolfs A."/>
            <person name="Bhullar B."/>
            <person name="Murthy T.V.S."/>
            <person name="Zhu C."/>
            <person name="Berger M.F."/>
            <person name="Camargo A.A."/>
            <person name="Kelley F."/>
            <person name="McCarron S."/>
            <person name="Jepson D."/>
            <person name="Richardson A."/>
            <person name="Raphael J."/>
            <person name="Moreira D."/>
            <person name="Taycher E."/>
            <person name="Zuo D."/>
            <person name="Mohr S."/>
            <person name="Kane M.F."/>
            <person name="Williamson J."/>
            <person name="Simpson A.J.G."/>
            <person name="Bulyk M.L."/>
            <person name="Harlow E."/>
            <person name="Marsischky G."/>
            <person name="Kolodner R.D."/>
            <person name="LaBaer J."/>
        </authorList>
    </citation>
    <scope>NUCLEOTIDE SEQUENCE [GENOMIC DNA]</scope>
    <source>
        <strain>ATCC 204508 / S288c</strain>
    </source>
</reference>
<reference key="4">
    <citation type="journal article" date="2003" name="Nature">
        <title>Global analysis of protein localization in budding yeast.</title>
        <authorList>
            <person name="Huh W.-K."/>
            <person name="Falvo J.V."/>
            <person name="Gerke L.C."/>
            <person name="Carroll A.S."/>
            <person name="Howson R.W."/>
            <person name="Weissman J.S."/>
            <person name="O'Shea E.K."/>
        </authorList>
    </citation>
    <scope>SUBCELLULAR LOCATION [LARGE SCALE ANALYSIS]</scope>
</reference>
<reference key="5">
    <citation type="journal article" date="2003" name="Nature">
        <title>Global analysis of protein expression in yeast.</title>
        <authorList>
            <person name="Ghaemmaghami S."/>
            <person name="Huh W.-K."/>
            <person name="Bower K."/>
            <person name="Howson R.W."/>
            <person name="Belle A."/>
            <person name="Dephoure N."/>
            <person name="O'Shea E.K."/>
            <person name="Weissman J.S."/>
        </authorList>
    </citation>
    <scope>LEVEL OF PROTEIN EXPRESSION [LARGE SCALE ANALYSIS]</scope>
</reference>
<organism>
    <name type="scientific">Saccharomyces cerevisiae (strain ATCC 204508 / S288c)</name>
    <name type="common">Baker's yeast</name>
    <dbReference type="NCBI Taxonomy" id="559292"/>
    <lineage>
        <taxon>Eukaryota</taxon>
        <taxon>Fungi</taxon>
        <taxon>Dikarya</taxon>
        <taxon>Ascomycota</taxon>
        <taxon>Saccharomycotina</taxon>
        <taxon>Saccharomycetes</taxon>
        <taxon>Saccharomycetales</taxon>
        <taxon>Saccharomycetaceae</taxon>
        <taxon>Saccharomyces</taxon>
    </lineage>
</organism>
<keyword id="KW-0496">Mitochondrion</keyword>
<keyword id="KW-0539">Nucleus</keyword>
<keyword id="KW-1185">Reference proteome</keyword>
<sequence>MSSSTKCKKAYEAVVKMVTHRFNSKAVRNYHQPQGLNRSLATRNAARVRGMVPSRRGGVGLYKSSSSKLMNKLGRQKTWINEFEHFNSLHEIAYTPNIALSSEIQKYLKALETNYRSIYEKSSELLDKKLEEIDKKWIEKNGCIPDASKDDVEKNLRKQYLADVQDVKNEHIPVMNCEPGGSQFKYLCKTIELLSSNKTICFAIDVEAFEFDTDIVTEIGIAIYDPRENIYSLMPIIRSYHLIVAEALPLRNKKFVCDFKDCFLLGESLVLPLEQCVEFIQSLINFYMKCETDQDTTWERAFVGHAIAGDIKWLKKIGVHVPELDNELTKPEDSTESKGVRKHVKMLDTEKIYSMCYGKKGSSLGKLLRLFHLPHAFLHNAGNDAYYTLLLMLKLGDYNFRKQIGADDLETMGYRIREWFKREADEPKILPMSYVLSVMNANNSKPKVDDKGRKKPRDLVPQTEFSGSHWFQNARAAFKSTLV</sequence>
<dbReference type="EMBL" id="U33057">
    <property type="protein sequence ID" value="AAB64977.1"/>
    <property type="molecule type" value="Genomic_DNA"/>
</dbReference>
<dbReference type="EMBL" id="AY692699">
    <property type="protein sequence ID" value="AAT92718.1"/>
    <property type="molecule type" value="Genomic_DNA"/>
</dbReference>
<dbReference type="EMBL" id="BK006938">
    <property type="protein sequence ID" value="DAA12345.1"/>
    <property type="molecule type" value="Genomic_DNA"/>
</dbReference>
<dbReference type="PIR" id="S69571">
    <property type="entry name" value="S69571"/>
</dbReference>
<dbReference type="RefSeq" id="NP_010802.1">
    <property type="nucleotide sequence ID" value="NM_001180822.1"/>
</dbReference>
<dbReference type="SMR" id="Q04408"/>
<dbReference type="BioGRID" id="32565">
    <property type="interactions" value="89"/>
</dbReference>
<dbReference type="DIP" id="DIP-5272N"/>
<dbReference type="FunCoup" id="Q04408">
    <property type="interactions" value="65"/>
</dbReference>
<dbReference type="IntAct" id="Q04408">
    <property type="interactions" value="2"/>
</dbReference>
<dbReference type="STRING" id="4932.YDR514C"/>
<dbReference type="PaxDb" id="4932-YDR514C"/>
<dbReference type="PeptideAtlas" id="Q04408"/>
<dbReference type="EnsemblFungi" id="YDR514C_mRNA">
    <property type="protein sequence ID" value="YDR514C"/>
    <property type="gene ID" value="YDR514C"/>
</dbReference>
<dbReference type="GeneID" id="852126"/>
<dbReference type="KEGG" id="sce:YDR514C"/>
<dbReference type="AGR" id="SGD:S000002922"/>
<dbReference type="SGD" id="S000002922">
    <property type="gene designation" value="YDR514C"/>
</dbReference>
<dbReference type="VEuPathDB" id="FungiDB:YDR514C"/>
<dbReference type="eggNOG" id="ENOG502QTQR">
    <property type="taxonomic scope" value="Eukaryota"/>
</dbReference>
<dbReference type="GeneTree" id="ENSGT00940000176471"/>
<dbReference type="HOGENOM" id="CLU_029052_0_0_1"/>
<dbReference type="InParanoid" id="Q04408"/>
<dbReference type="OMA" id="NKTICFA"/>
<dbReference type="OrthoDB" id="5953249at2759"/>
<dbReference type="BioCyc" id="YEAST:G3O-30033-MONOMER"/>
<dbReference type="BioGRID-ORCS" id="852126">
    <property type="hits" value="0 hits in 10 CRISPR screens"/>
</dbReference>
<dbReference type="PRO" id="PR:Q04408"/>
<dbReference type="Proteomes" id="UP000002311">
    <property type="component" value="Chromosome IV"/>
</dbReference>
<dbReference type="RNAct" id="Q04408">
    <property type="molecule type" value="protein"/>
</dbReference>
<dbReference type="GO" id="GO:0005739">
    <property type="term" value="C:mitochondrion"/>
    <property type="evidence" value="ECO:0000314"/>
    <property type="project" value="SGD"/>
</dbReference>
<dbReference type="GO" id="GO:0005634">
    <property type="term" value="C:nucleus"/>
    <property type="evidence" value="ECO:0007005"/>
    <property type="project" value="SGD"/>
</dbReference>
<dbReference type="GO" id="GO:0003676">
    <property type="term" value="F:nucleic acid binding"/>
    <property type="evidence" value="ECO:0007669"/>
    <property type="project" value="InterPro"/>
</dbReference>
<dbReference type="Gene3D" id="3.30.420.10">
    <property type="entry name" value="Ribonuclease H-like superfamily/Ribonuclease H"/>
    <property type="match status" value="1"/>
</dbReference>
<dbReference type="InterPro" id="IPR040151">
    <property type="entry name" value="Gfd2/YDR514C-like"/>
</dbReference>
<dbReference type="InterPro" id="IPR048519">
    <property type="entry name" value="Gfd2/YDR514C-like_C"/>
</dbReference>
<dbReference type="InterPro" id="IPR012337">
    <property type="entry name" value="RNaseH-like_sf"/>
</dbReference>
<dbReference type="InterPro" id="IPR036397">
    <property type="entry name" value="RNaseH_sf"/>
</dbReference>
<dbReference type="PANTHER" id="PTHR28083">
    <property type="entry name" value="GOOD FOR FULL DBP5 ACTIVITY PROTEIN 2"/>
    <property type="match status" value="1"/>
</dbReference>
<dbReference type="PANTHER" id="PTHR28083:SF1">
    <property type="entry name" value="GOOD FOR FULL DBP5 ACTIVITY PROTEIN 2"/>
    <property type="match status" value="1"/>
</dbReference>
<dbReference type="Pfam" id="PF21762">
    <property type="entry name" value="DEDDh_C"/>
    <property type="match status" value="1"/>
</dbReference>
<dbReference type="SUPFAM" id="SSF53098">
    <property type="entry name" value="Ribonuclease H-like"/>
    <property type="match status" value="1"/>
</dbReference>
<gene>
    <name type="ordered locus">YDR514C</name>
</gene>